<reference key="1">
    <citation type="journal article" date="2004" name="Nat. Genet.">
        <title>Complete sequencing and characterization of 21,243 full-length human cDNAs.</title>
        <authorList>
            <person name="Ota T."/>
            <person name="Suzuki Y."/>
            <person name="Nishikawa T."/>
            <person name="Otsuki T."/>
            <person name="Sugiyama T."/>
            <person name="Irie R."/>
            <person name="Wakamatsu A."/>
            <person name="Hayashi K."/>
            <person name="Sato H."/>
            <person name="Nagai K."/>
            <person name="Kimura K."/>
            <person name="Makita H."/>
            <person name="Sekine M."/>
            <person name="Obayashi M."/>
            <person name="Nishi T."/>
            <person name="Shibahara T."/>
            <person name="Tanaka T."/>
            <person name="Ishii S."/>
            <person name="Yamamoto J."/>
            <person name="Saito K."/>
            <person name="Kawai Y."/>
            <person name="Isono Y."/>
            <person name="Nakamura Y."/>
            <person name="Nagahari K."/>
            <person name="Murakami K."/>
            <person name="Yasuda T."/>
            <person name="Iwayanagi T."/>
            <person name="Wagatsuma M."/>
            <person name="Shiratori A."/>
            <person name="Sudo H."/>
            <person name="Hosoiri T."/>
            <person name="Kaku Y."/>
            <person name="Kodaira H."/>
            <person name="Kondo H."/>
            <person name="Sugawara M."/>
            <person name="Takahashi M."/>
            <person name="Kanda K."/>
            <person name="Yokoi T."/>
            <person name="Furuya T."/>
            <person name="Kikkawa E."/>
            <person name="Omura Y."/>
            <person name="Abe K."/>
            <person name="Kamihara K."/>
            <person name="Katsuta N."/>
            <person name="Sato K."/>
            <person name="Tanikawa M."/>
            <person name="Yamazaki M."/>
            <person name="Ninomiya K."/>
            <person name="Ishibashi T."/>
            <person name="Yamashita H."/>
            <person name="Murakawa K."/>
            <person name="Fujimori K."/>
            <person name="Tanai H."/>
            <person name="Kimata M."/>
            <person name="Watanabe M."/>
            <person name="Hiraoka S."/>
            <person name="Chiba Y."/>
            <person name="Ishida S."/>
            <person name="Ono Y."/>
            <person name="Takiguchi S."/>
            <person name="Watanabe S."/>
            <person name="Yosida M."/>
            <person name="Hotuta T."/>
            <person name="Kusano J."/>
            <person name="Kanehori K."/>
            <person name="Takahashi-Fujii A."/>
            <person name="Hara H."/>
            <person name="Tanase T.-O."/>
            <person name="Nomura Y."/>
            <person name="Togiya S."/>
            <person name="Komai F."/>
            <person name="Hara R."/>
            <person name="Takeuchi K."/>
            <person name="Arita M."/>
            <person name="Imose N."/>
            <person name="Musashino K."/>
            <person name="Yuuki H."/>
            <person name="Oshima A."/>
            <person name="Sasaki N."/>
            <person name="Aotsuka S."/>
            <person name="Yoshikawa Y."/>
            <person name="Matsunawa H."/>
            <person name="Ichihara T."/>
            <person name="Shiohata N."/>
            <person name="Sano S."/>
            <person name="Moriya S."/>
            <person name="Momiyama H."/>
            <person name="Satoh N."/>
            <person name="Takami S."/>
            <person name="Terashima Y."/>
            <person name="Suzuki O."/>
            <person name="Nakagawa S."/>
            <person name="Senoh A."/>
            <person name="Mizoguchi H."/>
            <person name="Goto Y."/>
            <person name="Shimizu F."/>
            <person name="Wakebe H."/>
            <person name="Hishigaki H."/>
            <person name="Watanabe T."/>
            <person name="Sugiyama A."/>
            <person name="Takemoto M."/>
            <person name="Kawakami B."/>
            <person name="Yamazaki M."/>
            <person name="Watanabe K."/>
            <person name="Kumagai A."/>
            <person name="Itakura S."/>
            <person name="Fukuzumi Y."/>
            <person name="Fujimori Y."/>
            <person name="Komiyama M."/>
            <person name="Tashiro H."/>
            <person name="Tanigami A."/>
            <person name="Fujiwara T."/>
            <person name="Ono T."/>
            <person name="Yamada K."/>
            <person name="Fujii Y."/>
            <person name="Ozaki K."/>
            <person name="Hirao M."/>
            <person name="Ohmori Y."/>
            <person name="Kawabata A."/>
            <person name="Hikiji T."/>
            <person name="Kobatake N."/>
            <person name="Inagaki H."/>
            <person name="Ikema Y."/>
            <person name="Okamoto S."/>
            <person name="Okitani R."/>
            <person name="Kawakami T."/>
            <person name="Noguchi S."/>
            <person name="Itoh T."/>
            <person name="Shigeta K."/>
            <person name="Senba T."/>
            <person name="Matsumura K."/>
            <person name="Nakajima Y."/>
            <person name="Mizuno T."/>
            <person name="Morinaga M."/>
            <person name="Sasaki M."/>
            <person name="Togashi T."/>
            <person name="Oyama M."/>
            <person name="Hata H."/>
            <person name="Watanabe M."/>
            <person name="Komatsu T."/>
            <person name="Mizushima-Sugano J."/>
            <person name="Satoh T."/>
            <person name="Shirai Y."/>
            <person name="Takahashi Y."/>
            <person name="Nakagawa K."/>
            <person name="Okumura K."/>
            <person name="Nagase T."/>
            <person name="Nomura N."/>
            <person name="Kikuchi H."/>
            <person name="Masuho Y."/>
            <person name="Yamashita R."/>
            <person name="Nakai K."/>
            <person name="Yada T."/>
            <person name="Nakamura Y."/>
            <person name="Ohara O."/>
            <person name="Isogai T."/>
            <person name="Sugano S."/>
        </authorList>
    </citation>
    <scope>NUCLEOTIDE SEQUENCE [LARGE SCALE MRNA]</scope>
</reference>
<reference key="2">
    <citation type="journal article" date="2003" name="Genome Res.">
        <title>The secreted protein discovery initiative (SPDI), a large-scale effort to identify novel human secreted and transmembrane proteins: a bioinformatics assessment.</title>
        <authorList>
            <person name="Clark H.F."/>
            <person name="Gurney A.L."/>
            <person name="Abaya E."/>
            <person name="Baker K."/>
            <person name="Baldwin D.T."/>
            <person name="Brush J."/>
            <person name="Chen J."/>
            <person name="Chow B."/>
            <person name="Chui C."/>
            <person name="Crowley C."/>
            <person name="Currell B."/>
            <person name="Deuel B."/>
            <person name="Dowd P."/>
            <person name="Eaton D."/>
            <person name="Foster J.S."/>
            <person name="Grimaldi C."/>
            <person name="Gu Q."/>
            <person name="Hass P.E."/>
            <person name="Heldens S."/>
            <person name="Huang A."/>
            <person name="Kim H.S."/>
            <person name="Klimowski L."/>
            <person name="Jin Y."/>
            <person name="Johnson S."/>
            <person name="Lee J."/>
            <person name="Lewis L."/>
            <person name="Liao D."/>
            <person name="Mark M.R."/>
            <person name="Robbie E."/>
            <person name="Sanchez C."/>
            <person name="Schoenfeld J."/>
            <person name="Seshagiri S."/>
            <person name="Simmons L."/>
            <person name="Singh J."/>
            <person name="Smith V."/>
            <person name="Stinson J."/>
            <person name="Vagts A."/>
            <person name="Vandlen R.L."/>
            <person name="Watanabe C."/>
            <person name="Wieand D."/>
            <person name="Woods K."/>
            <person name="Xie M.-H."/>
            <person name="Yansura D.G."/>
            <person name="Yi S."/>
            <person name="Yu G."/>
            <person name="Yuan J."/>
            <person name="Zhang M."/>
            <person name="Zhang Z."/>
            <person name="Goddard A.D."/>
            <person name="Wood W.I."/>
            <person name="Godowski P.J."/>
            <person name="Gray A.M."/>
        </authorList>
    </citation>
    <scope>NUCLEOTIDE SEQUENCE [LARGE SCALE MRNA]</scope>
    <scope>VARIANT ILE-133</scope>
</reference>
<reference key="3">
    <citation type="journal article" date="2019" name="Haematologica">
        <title>Tspan18 is a novel regulator of the Ca2+ channel Orai1 and von Willebrand factor release in endothelial cells.</title>
        <authorList>
            <person name="Noy P.J."/>
            <person name="Gavin R.L."/>
            <person name="Colombo D."/>
            <person name="Haining E.J."/>
            <person name="Reyat J.S."/>
            <person name="Payne H."/>
            <person name="Thielmann I."/>
            <person name="Lokman A.B."/>
            <person name="Neag G."/>
            <person name="Yang J."/>
            <person name="Lloyd T."/>
            <person name="Harrison N."/>
            <person name="Heath V.L."/>
            <person name="Gardiner C."/>
            <person name="Whitworth K.M."/>
            <person name="Robinson J."/>
            <person name="Koo C.Z."/>
            <person name="Di Maio A."/>
            <person name="Harrison P."/>
            <person name="Lee S.P."/>
            <person name="Michelangeli F."/>
            <person name="Kalia N."/>
            <person name="Rainger G.E."/>
            <person name="Nieswandt B."/>
            <person name="Brill A."/>
            <person name="Watson S.P."/>
            <person name="Tomlinson M.G."/>
        </authorList>
    </citation>
    <scope>FUNCTION</scope>
    <scope>INTERACTION WITH ORAI1</scope>
    <scope>TISSUE SPECIFICITY</scope>
</reference>
<reference key="4">
    <citation type="journal article" date="2021" name="Biol. Open">
        <title>Tetraspanin18 regulates angiogenesis through VEGFR2 and Notch pathways.</title>
        <authorList>
            <person name="Li G.X."/>
            <person name="Zhang S."/>
            <person name="Liu R."/>
            <person name="Singh B."/>
            <person name="Singh S."/>
            <person name="Quinn D.I."/>
            <person name="Crump G."/>
            <person name="Gill P.S."/>
        </authorList>
    </citation>
    <scope>TISSUE SPECIFICITY</scope>
</reference>
<feature type="chain" id="PRO_0000219268" description="Tetraspanin-18">
    <location>
        <begin position="1"/>
        <end position="248"/>
    </location>
</feature>
<feature type="topological domain" description="Cytoplasmic" evidence="1">
    <location>
        <begin position="1"/>
        <end position="13"/>
    </location>
</feature>
<feature type="transmembrane region" description="Helical" evidence="1">
    <location>
        <begin position="14"/>
        <end position="34"/>
    </location>
</feature>
<feature type="topological domain" description="Extracellular" evidence="1">
    <location>
        <begin position="35"/>
        <end position="49"/>
    </location>
</feature>
<feature type="transmembrane region" description="Helical" evidence="1">
    <location>
        <begin position="50"/>
        <end position="70"/>
    </location>
</feature>
<feature type="topological domain" description="Cytoplasmic" evidence="1">
    <location>
        <begin position="71"/>
        <end position="83"/>
    </location>
</feature>
<feature type="transmembrane region" description="Helical" evidence="1">
    <location>
        <begin position="84"/>
        <end position="104"/>
    </location>
</feature>
<feature type="topological domain" description="Extracellular" evidence="1">
    <location>
        <begin position="105"/>
        <end position="223"/>
    </location>
</feature>
<feature type="transmembrane region" description="Helical" evidence="1">
    <location>
        <begin position="224"/>
        <end position="244"/>
    </location>
</feature>
<feature type="topological domain" description="Cytoplasmic" evidence="1">
    <location>
        <begin position="245"/>
        <end position="248"/>
    </location>
</feature>
<feature type="glycosylation site" description="N-linked (GlcNAc...) asparagine" evidence="1">
    <location>
        <position position="111"/>
    </location>
</feature>
<feature type="glycosylation site" description="N-linked (GlcNAc...) asparagine" evidence="1">
    <location>
        <position position="129"/>
    </location>
</feature>
<feature type="sequence variant" id="VAR_057279" description="In dbSNP:rs2291334." evidence="2">
    <original>V</original>
    <variation>I</variation>
    <location>
        <position position="133"/>
    </location>
</feature>
<keyword id="KW-0325">Glycoprotein</keyword>
<keyword id="KW-0472">Membrane</keyword>
<keyword id="KW-1267">Proteomics identification</keyword>
<keyword id="KW-1185">Reference proteome</keyword>
<keyword id="KW-0812">Transmembrane</keyword>
<keyword id="KW-1133">Transmembrane helix</keyword>
<name>TSN18_HUMAN</name>
<dbReference type="EMBL" id="AK027715">
    <property type="protein sequence ID" value="BAB55318.1"/>
    <property type="molecule type" value="mRNA"/>
</dbReference>
<dbReference type="EMBL" id="AK075547">
    <property type="protein sequence ID" value="BAC11690.1"/>
    <property type="status" value="ALT_INIT"/>
    <property type="molecule type" value="mRNA"/>
</dbReference>
<dbReference type="EMBL" id="AY358087">
    <property type="protein sequence ID" value="AAQ88454.1"/>
    <property type="molecule type" value="mRNA"/>
</dbReference>
<dbReference type="CCDS" id="CCDS7910.1"/>
<dbReference type="RefSeq" id="NP_570139.3">
    <property type="nucleotide sequence ID" value="NM_130783.4"/>
</dbReference>
<dbReference type="RefSeq" id="XP_006718436.1">
    <property type="nucleotide sequence ID" value="XM_006718373.3"/>
</dbReference>
<dbReference type="RefSeq" id="XP_011518761.1">
    <property type="nucleotide sequence ID" value="XM_011520459.4"/>
</dbReference>
<dbReference type="SMR" id="Q96SJ8"/>
<dbReference type="BioGRID" id="124669">
    <property type="interactions" value="27"/>
</dbReference>
<dbReference type="FunCoup" id="Q96SJ8">
    <property type="interactions" value="47"/>
</dbReference>
<dbReference type="IntAct" id="Q96SJ8">
    <property type="interactions" value="17"/>
</dbReference>
<dbReference type="STRING" id="9606.ENSP00000429993"/>
<dbReference type="TCDB" id="8.A.40.1.23">
    <property type="family name" value="the tetraspanin (tetraspanin) family"/>
</dbReference>
<dbReference type="GlyCosmos" id="Q96SJ8">
    <property type="glycosylation" value="2 sites, No reported glycans"/>
</dbReference>
<dbReference type="GlyGen" id="Q96SJ8">
    <property type="glycosylation" value="2 sites"/>
</dbReference>
<dbReference type="SwissPalm" id="Q96SJ8"/>
<dbReference type="BioMuta" id="TSPAN18"/>
<dbReference type="DMDM" id="68053316"/>
<dbReference type="jPOST" id="Q96SJ8"/>
<dbReference type="MassIVE" id="Q96SJ8"/>
<dbReference type="PaxDb" id="9606-ENSP00000339820"/>
<dbReference type="PeptideAtlas" id="Q96SJ8"/>
<dbReference type="ProteomicsDB" id="78117"/>
<dbReference type="Antibodypedia" id="68460">
    <property type="antibodies" value="58 antibodies from 9 providers"/>
</dbReference>
<dbReference type="DNASU" id="90139"/>
<dbReference type="Ensembl" id="ENST00000340160.7">
    <property type="protein sequence ID" value="ENSP00000339820.3"/>
    <property type="gene ID" value="ENSG00000157570.12"/>
</dbReference>
<dbReference type="Ensembl" id="ENST00000520358.7">
    <property type="protein sequence ID" value="ENSP00000429993.2"/>
    <property type="gene ID" value="ENSG00000157570.12"/>
</dbReference>
<dbReference type="GeneID" id="90139"/>
<dbReference type="KEGG" id="hsa:90139"/>
<dbReference type="MANE-Select" id="ENST00000520358.7">
    <property type="protein sequence ID" value="ENSP00000429993.2"/>
    <property type="RefSeq nucleotide sequence ID" value="NM_130783.5"/>
    <property type="RefSeq protein sequence ID" value="NP_570139.3"/>
</dbReference>
<dbReference type="UCSC" id="uc001mye.5">
    <property type="organism name" value="human"/>
</dbReference>
<dbReference type="AGR" id="HGNC:20660"/>
<dbReference type="CTD" id="90139"/>
<dbReference type="DisGeNET" id="90139"/>
<dbReference type="GeneCards" id="TSPAN18"/>
<dbReference type="HGNC" id="HGNC:20660">
    <property type="gene designation" value="TSPAN18"/>
</dbReference>
<dbReference type="HPA" id="ENSG00000157570">
    <property type="expression patterns" value="Tissue enhanced (heart)"/>
</dbReference>
<dbReference type="MIM" id="619399">
    <property type="type" value="gene"/>
</dbReference>
<dbReference type="neXtProt" id="NX_Q96SJ8"/>
<dbReference type="OpenTargets" id="ENSG00000157570"/>
<dbReference type="PharmGKB" id="PA142670688"/>
<dbReference type="VEuPathDB" id="HostDB:ENSG00000157570"/>
<dbReference type="eggNOG" id="KOG3882">
    <property type="taxonomic scope" value="Eukaryota"/>
</dbReference>
<dbReference type="GeneTree" id="ENSGT00940000157667"/>
<dbReference type="HOGENOM" id="CLU_055524_4_1_1"/>
<dbReference type="InParanoid" id="Q96SJ8"/>
<dbReference type="OMA" id="ACCQREP"/>
<dbReference type="OrthoDB" id="71600at2759"/>
<dbReference type="PAN-GO" id="Q96SJ8">
    <property type="GO annotations" value="1 GO annotation based on evolutionary models"/>
</dbReference>
<dbReference type="PhylomeDB" id="Q96SJ8"/>
<dbReference type="TreeFam" id="TF352892"/>
<dbReference type="PathwayCommons" id="Q96SJ8"/>
<dbReference type="SignaLink" id="Q96SJ8"/>
<dbReference type="BioGRID-ORCS" id="90139">
    <property type="hits" value="16 hits in 1156 CRISPR screens"/>
</dbReference>
<dbReference type="ChiTaRS" id="TSPAN18">
    <property type="organism name" value="human"/>
</dbReference>
<dbReference type="GenomeRNAi" id="90139"/>
<dbReference type="Pharos" id="Q96SJ8">
    <property type="development level" value="Tbio"/>
</dbReference>
<dbReference type="PRO" id="PR:Q96SJ8"/>
<dbReference type="Proteomes" id="UP000005640">
    <property type="component" value="Chromosome 11"/>
</dbReference>
<dbReference type="RNAct" id="Q96SJ8">
    <property type="molecule type" value="protein"/>
</dbReference>
<dbReference type="Bgee" id="ENSG00000157570">
    <property type="expression patterns" value="Expressed in cardiac muscle of right atrium and 138 other cell types or tissues"/>
</dbReference>
<dbReference type="ExpressionAtlas" id="Q96SJ8">
    <property type="expression patterns" value="baseline and differential"/>
</dbReference>
<dbReference type="GO" id="GO:0005886">
    <property type="term" value="C:plasma membrane"/>
    <property type="evidence" value="ECO:0000318"/>
    <property type="project" value="GO_Central"/>
</dbReference>
<dbReference type="GO" id="GO:0017156">
    <property type="term" value="P:calcium-ion regulated exocytosis"/>
    <property type="evidence" value="ECO:0007669"/>
    <property type="project" value="Ensembl"/>
</dbReference>
<dbReference type="GO" id="GO:0051649">
    <property type="term" value="P:establishment of localization in cell"/>
    <property type="evidence" value="ECO:0007669"/>
    <property type="project" value="Ensembl"/>
</dbReference>
<dbReference type="GO" id="GO:0007599">
    <property type="term" value="P:hemostasis"/>
    <property type="evidence" value="ECO:0007669"/>
    <property type="project" value="Ensembl"/>
</dbReference>
<dbReference type="GO" id="GO:0006954">
    <property type="term" value="P:inflammatory response"/>
    <property type="evidence" value="ECO:0007669"/>
    <property type="project" value="Ensembl"/>
</dbReference>
<dbReference type="GO" id="GO:1903670">
    <property type="term" value="P:regulation of sprouting angiogenesis"/>
    <property type="evidence" value="ECO:0000315"/>
    <property type="project" value="UniProtKB"/>
</dbReference>
<dbReference type="CDD" id="cd03156">
    <property type="entry name" value="uroplakin_I_like_LEL"/>
    <property type="match status" value="1"/>
</dbReference>
<dbReference type="FunFam" id="1.10.1450.10:FF:000012">
    <property type="entry name" value="Tetraspanin"/>
    <property type="match status" value="1"/>
</dbReference>
<dbReference type="Gene3D" id="1.10.1450.10">
    <property type="entry name" value="Tetraspanin"/>
    <property type="match status" value="1"/>
</dbReference>
<dbReference type="InterPro" id="IPR018499">
    <property type="entry name" value="Tetraspanin/Peripherin"/>
</dbReference>
<dbReference type="InterPro" id="IPR000301">
    <property type="entry name" value="Tetraspanin_animals"/>
</dbReference>
<dbReference type="InterPro" id="IPR018503">
    <property type="entry name" value="Tetraspanin_CS"/>
</dbReference>
<dbReference type="InterPro" id="IPR008952">
    <property type="entry name" value="Tetraspanin_EC2_sf"/>
</dbReference>
<dbReference type="PANTHER" id="PTHR19282">
    <property type="entry name" value="TETRASPANIN"/>
    <property type="match status" value="1"/>
</dbReference>
<dbReference type="PANTHER" id="PTHR19282:SF249">
    <property type="entry name" value="TETRASPANIN-18"/>
    <property type="match status" value="1"/>
</dbReference>
<dbReference type="Pfam" id="PF00335">
    <property type="entry name" value="Tetraspanin"/>
    <property type="match status" value="1"/>
</dbReference>
<dbReference type="PIRSF" id="PIRSF002419">
    <property type="entry name" value="Tetraspanin"/>
    <property type="match status" value="1"/>
</dbReference>
<dbReference type="PRINTS" id="PR00259">
    <property type="entry name" value="TMFOUR"/>
</dbReference>
<dbReference type="SUPFAM" id="SSF48652">
    <property type="entry name" value="Tetraspanin"/>
    <property type="match status" value="1"/>
</dbReference>
<dbReference type="PROSITE" id="PS00421">
    <property type="entry name" value="TM4_1"/>
    <property type="match status" value="1"/>
</dbReference>
<sequence length="248" mass="27710">MEGDCLSCMKYLMFVFNFFIFLGGACLLAIGIWVMVDPTGFREIVAANPLLLTGAYILLAMGGLLFLLGFLGCCGAVRENKCLLLFFFLFILIIFLAELSAAILAFIFRENLTREFFTKELTKHYQGNNDTDVFSATWNSVMITFGCCGVNGPEDFKFASVFRLLTLDSEEVPEACCRREPQSRDGVLLSREECLLGRSLFLNKQGCYTVILNTFETYVYLAGALAIGVLAIELFAMIFAMCLFRGIQ</sequence>
<gene>
    <name evidence="6" type="primary">TSPAN18</name>
    <name type="ORF">UNQ3042/PRO9858</name>
</gene>
<protein>
    <recommendedName>
        <fullName evidence="5">Tetraspanin-18</fullName>
        <shortName>Tspan-18</shortName>
    </recommendedName>
</protein>
<organism>
    <name type="scientific">Homo sapiens</name>
    <name type="common">Human</name>
    <dbReference type="NCBI Taxonomy" id="9606"/>
    <lineage>
        <taxon>Eukaryota</taxon>
        <taxon>Metazoa</taxon>
        <taxon>Chordata</taxon>
        <taxon>Craniata</taxon>
        <taxon>Vertebrata</taxon>
        <taxon>Euteleostomi</taxon>
        <taxon>Mammalia</taxon>
        <taxon>Eutheria</taxon>
        <taxon>Euarchontoglires</taxon>
        <taxon>Primates</taxon>
        <taxon>Haplorrhini</taxon>
        <taxon>Catarrhini</taxon>
        <taxon>Hominidae</taxon>
        <taxon>Homo</taxon>
    </lineage>
</organism>
<evidence type="ECO:0000255" key="1"/>
<evidence type="ECO:0000269" key="2">
    <source>
    </source>
</evidence>
<evidence type="ECO:0000269" key="3">
    <source>
    </source>
</evidence>
<evidence type="ECO:0000269" key="4">
    <source>
    </source>
</evidence>
<evidence type="ECO:0000305" key="5"/>
<evidence type="ECO:0000312" key="6">
    <source>
        <dbReference type="HGNC" id="HGNC:20660"/>
    </source>
</evidence>
<accession>Q96SJ8</accession>
<accession>Q6UY44</accession>
<accession>Q8NBI9</accession>
<proteinExistence type="evidence at protein level"/>
<comment type="function">
    <text evidence="3">Plays a role in the cell surface localization of ORAI1 and may participate in the regulation of Ca(2+) signaling and the VWF release in response to inflammatory stimuli.</text>
</comment>
<comment type="subunit">
    <text evidence="3">Interacts with ORAI1; this interaction regulates ORAI1 exit from the endoplasmic (ER), and/or Golgi, and trafficking to the cell surface.</text>
</comment>
<comment type="interaction">
    <interactant intactId="EBI-2851325">
        <id>Q96SJ8</id>
    </interactant>
    <interactant intactId="EBI-11722638">
        <id>Q8N6M3</id>
        <label>FITM2</label>
    </interactant>
    <organismsDiffer>false</organismsDiffer>
    <experiments>2</experiments>
</comment>
<comment type="subcellular location">
    <subcellularLocation>
        <location evidence="1">Membrane</location>
        <topology evidence="1">Multi-pass membrane protein</topology>
    </subcellularLocation>
</comment>
<comment type="tissue specificity">
    <text evidence="3 4">Highly expressed in primary endothelial cells (PubMed:30573509, PubMed:32694189). Expressed in the embryo heart (PubMed:32694189). Weakly expressed the embryo skeletal muscle (PubMed:32694189).</text>
</comment>
<comment type="similarity">
    <text evidence="5">Belongs to the tetraspanin (TM4SF) family.</text>
</comment>
<comment type="sequence caution" evidence="5">
    <conflict type="erroneous initiation">
        <sequence resource="EMBL-CDS" id="BAC11690"/>
    </conflict>
    <text>Truncated N-terminus.</text>
</comment>